<proteinExistence type="inferred from homology"/>
<gene>
    <name type="ordered locus">BQ2027_MB2703</name>
</gene>
<reference key="1">
    <citation type="journal article" date="2003" name="Proc. Natl. Acad. Sci. U.S.A.">
        <title>The complete genome sequence of Mycobacterium bovis.</title>
        <authorList>
            <person name="Garnier T."/>
            <person name="Eiglmeier K."/>
            <person name="Camus J.-C."/>
            <person name="Medina N."/>
            <person name="Mansoor H."/>
            <person name="Pryor M."/>
            <person name="Duthoy S."/>
            <person name="Grondin S."/>
            <person name="Lacroix C."/>
            <person name="Monsempe C."/>
            <person name="Simon S."/>
            <person name="Harris B."/>
            <person name="Atkin R."/>
            <person name="Doggett J."/>
            <person name="Mayes R."/>
            <person name="Keating L."/>
            <person name="Wheeler P.R."/>
            <person name="Parkhill J."/>
            <person name="Barrell B.G."/>
            <person name="Cole S.T."/>
            <person name="Gordon S.V."/>
            <person name="Hewinson R.G."/>
        </authorList>
    </citation>
    <scope>NUCLEOTIDE SEQUENCE [LARGE SCALE GENOMIC DNA]</scope>
    <source>
        <strain>ATCC BAA-935 / AF2122/97</strain>
    </source>
</reference>
<reference key="2">
    <citation type="journal article" date="2017" name="Genome Announc.">
        <title>Updated reference genome sequence and annotation of Mycobacterium bovis AF2122/97.</title>
        <authorList>
            <person name="Malone K.M."/>
            <person name="Farrell D."/>
            <person name="Stuber T.P."/>
            <person name="Schubert O.T."/>
            <person name="Aebersold R."/>
            <person name="Robbe-Austerman S."/>
            <person name="Gordon S.V."/>
        </authorList>
    </citation>
    <scope>NUCLEOTIDE SEQUENCE [LARGE SCALE GENOMIC DNA]</scope>
    <scope>GENOME REANNOTATION</scope>
    <source>
        <strain>ATCC BAA-935 / AF2122/97</strain>
    </source>
</reference>
<organism>
    <name type="scientific">Mycobacterium bovis (strain ATCC BAA-935 / AF2122/97)</name>
    <dbReference type="NCBI Taxonomy" id="233413"/>
    <lineage>
        <taxon>Bacteria</taxon>
        <taxon>Bacillati</taxon>
        <taxon>Actinomycetota</taxon>
        <taxon>Actinomycetes</taxon>
        <taxon>Mycobacteriales</taxon>
        <taxon>Mycobacteriaceae</taxon>
        <taxon>Mycobacterium</taxon>
        <taxon>Mycobacterium tuberculosis complex</taxon>
    </lineage>
</organism>
<evidence type="ECO:0000255" key="1"/>
<evidence type="ECO:0000305" key="2"/>
<dbReference type="EMBL" id="LT708304">
    <property type="protein sequence ID" value="SIU01321.1"/>
    <property type="molecule type" value="Genomic_DNA"/>
</dbReference>
<dbReference type="RefSeq" id="NP_856349.1">
    <property type="nucleotide sequence ID" value="NC_002945.3"/>
</dbReference>
<dbReference type="RefSeq" id="WP_003413894.1">
    <property type="nucleotide sequence ID" value="NC_002945.4"/>
</dbReference>
<dbReference type="SMR" id="P0A607"/>
<dbReference type="TCDB" id="2.A.45.2.2">
    <property type="family name" value="the arsenite-antimonite (arsb) efflux family"/>
</dbReference>
<dbReference type="KEGG" id="mbo:BQ2027_MB2703"/>
<dbReference type="PATRIC" id="fig|233413.5.peg.2963"/>
<dbReference type="Proteomes" id="UP000001419">
    <property type="component" value="Chromosome"/>
</dbReference>
<dbReference type="GO" id="GO:0005886">
    <property type="term" value="C:plasma membrane"/>
    <property type="evidence" value="ECO:0007669"/>
    <property type="project" value="UniProtKB-SubCell"/>
</dbReference>
<dbReference type="GO" id="GO:0015105">
    <property type="term" value="F:arsenite transmembrane transporter activity"/>
    <property type="evidence" value="ECO:0007669"/>
    <property type="project" value="InterPro"/>
</dbReference>
<dbReference type="CDD" id="cd01116">
    <property type="entry name" value="P_permease"/>
    <property type="match status" value="1"/>
</dbReference>
<dbReference type="InterPro" id="IPR000802">
    <property type="entry name" value="Arsenical_pump_ArsB"/>
</dbReference>
<dbReference type="InterPro" id="IPR004680">
    <property type="entry name" value="Cit_transptr-like_dom"/>
</dbReference>
<dbReference type="InterPro" id="IPR051475">
    <property type="entry name" value="Diverse_Ion_Transporter"/>
</dbReference>
<dbReference type="PANTHER" id="PTHR43568">
    <property type="entry name" value="P PROTEIN"/>
    <property type="match status" value="1"/>
</dbReference>
<dbReference type="PANTHER" id="PTHR43568:SF1">
    <property type="entry name" value="P PROTEIN"/>
    <property type="match status" value="1"/>
</dbReference>
<dbReference type="Pfam" id="PF03600">
    <property type="entry name" value="CitMHS"/>
    <property type="match status" value="1"/>
</dbReference>
<dbReference type="PRINTS" id="PR00758">
    <property type="entry name" value="ARSENICPUMP"/>
</dbReference>
<name>Y2703_MYCBO</name>
<sequence length="429" mass="45188">MSVVAVTIFVAAYVLIASDRVNKTMVALTGAAAVVVLPVITSHDIFYSHDTGIDWDVIFLLVGMMIIVGVLRQTGVFEYTAIWAAKRARGSPLRIMILLVLVSALASALLDNVTTVLLIAPVTLLVCDRLNINTTSFLMAEVFASNIGGAATLVGDPPNIIVASRAGLTFNDFMLHLTPLVVIVLIALIAVLPRLFGSITVEADRIADVMALDEGEAIRDRGLLVKCGAVLVLVFAAFVAHPVLHIQPSLVALLGAGMLIVVSGLTRSEYLSSVEWDTLLFFAGLFIMVGALVKTGVVNDLARAATQLTGGNIVATAFLILGVSAPISGIIDNIPYVATMTPLVAELVAVMGGQPSTDTPWWALALGADFGGNLTAIGASANVVMLGIARRAGAPISFWEFTRKGAVVTAVSIALAAIYLWLRYFVLLH</sequence>
<keyword id="KW-1003">Cell membrane</keyword>
<keyword id="KW-0472">Membrane</keyword>
<keyword id="KW-1185">Reference proteome</keyword>
<keyword id="KW-0812">Transmembrane</keyword>
<keyword id="KW-1133">Transmembrane helix</keyword>
<keyword id="KW-0813">Transport</keyword>
<comment type="subcellular location">
    <subcellularLocation>
        <location evidence="2">Cell membrane</location>
        <topology evidence="2">Multi-pass membrane protein</topology>
    </subcellularLocation>
</comment>
<comment type="similarity">
    <text evidence="2">Belongs to the CitM (TC 2.A.11) transporter family.</text>
</comment>
<protein>
    <recommendedName>
        <fullName>Uncharacterized transporter Mb2703</fullName>
    </recommendedName>
</protein>
<feature type="chain" id="PRO_0000172513" description="Uncharacterized transporter Mb2703">
    <location>
        <begin position="1"/>
        <end position="429"/>
    </location>
</feature>
<feature type="transmembrane region" description="Helical" evidence="1">
    <location>
        <begin position="26"/>
        <end position="46"/>
    </location>
</feature>
<feature type="transmembrane region" description="Helical" evidence="1">
    <location>
        <begin position="51"/>
        <end position="71"/>
    </location>
</feature>
<feature type="transmembrane region" description="Helical" evidence="1">
    <location>
        <begin position="99"/>
        <end position="119"/>
    </location>
</feature>
<feature type="transmembrane region" description="Helical" evidence="1">
    <location>
        <begin position="135"/>
        <end position="155"/>
    </location>
</feature>
<feature type="transmembrane region" description="Helical" evidence="1">
    <location>
        <begin position="173"/>
        <end position="193"/>
    </location>
</feature>
<feature type="transmembrane region" description="Helical" evidence="1">
    <location>
        <begin position="223"/>
        <end position="243"/>
    </location>
</feature>
<feature type="transmembrane region" description="Helical" evidence="1">
    <location>
        <begin position="278"/>
        <end position="298"/>
    </location>
</feature>
<feature type="transmembrane region" description="Helical" evidence="1">
    <location>
        <begin position="311"/>
        <end position="331"/>
    </location>
</feature>
<feature type="transmembrane region" description="Helical" evidence="1">
    <location>
        <begin position="361"/>
        <end position="381"/>
    </location>
</feature>
<feature type="transmembrane region" description="Helical" evidence="1">
    <location>
        <begin position="407"/>
        <end position="427"/>
    </location>
</feature>
<accession>P0A607</accession>
<accession>A0A1R3Y1W3</accession>
<accession>O07186</accession>
<accession>X2BL67</accession>